<accession>P07046</accession>
<accession>Q7RVA2</accession>
<organism>
    <name type="scientific">Neurospora crassa (strain ATCC 24698 / 74-OR23-1A / CBS 708.71 / DSM 1257 / FGSC 987)</name>
    <dbReference type="NCBI Taxonomy" id="367110"/>
    <lineage>
        <taxon>Eukaryota</taxon>
        <taxon>Fungi</taxon>
        <taxon>Dikarya</taxon>
        <taxon>Ascomycota</taxon>
        <taxon>Pezizomycotina</taxon>
        <taxon>Sordariomycetes</taxon>
        <taxon>Sordariomycetidae</taxon>
        <taxon>Sordariales</taxon>
        <taxon>Sordariaceae</taxon>
        <taxon>Neurospora</taxon>
    </lineage>
</organism>
<reference key="1">
    <citation type="journal article" date="1989" name="J. Mol. Biol.">
        <title>DNA sequence, organization and regulation of the qa gene cluster of Neurospora crassa.</title>
        <authorList>
            <person name="Geever R.F."/>
            <person name="Huiet L."/>
            <person name="Baum J.A."/>
            <person name="Tyler B.M."/>
            <person name="Patel V.B."/>
            <person name="Rutledge B.J."/>
            <person name="Case M.E."/>
            <person name="Giles N.H."/>
        </authorList>
    </citation>
    <scope>NUCLEOTIDE SEQUENCE [GENOMIC DNA]</scope>
    <scope>FUNCTION</scope>
    <source>
        <strain>ATCC 24698 / 74-OR23-1A / CBS 708.71 / DSM 1257 / FGSC 987</strain>
    </source>
</reference>
<reference key="2">
    <citation type="journal article" date="1984" name="Gene">
        <title>Molecular characterization of the qa-4 gene of Neurospora crassa.</title>
        <authorList>
            <person name="Rutledge B.J."/>
        </authorList>
    </citation>
    <scope>NUCLEOTIDE SEQUENCE [GENOMIC DNA]</scope>
</reference>
<reference key="3">
    <citation type="journal article" date="2003" name="Nature">
        <title>The genome sequence of the filamentous fungus Neurospora crassa.</title>
        <authorList>
            <person name="Galagan J.E."/>
            <person name="Calvo S.E."/>
            <person name="Borkovich K.A."/>
            <person name="Selker E.U."/>
            <person name="Read N.D."/>
            <person name="Jaffe D.B."/>
            <person name="FitzHugh W."/>
            <person name="Ma L.-J."/>
            <person name="Smirnov S."/>
            <person name="Purcell S."/>
            <person name="Rehman B."/>
            <person name="Elkins T."/>
            <person name="Engels R."/>
            <person name="Wang S."/>
            <person name="Nielsen C.B."/>
            <person name="Butler J."/>
            <person name="Endrizzi M."/>
            <person name="Qui D."/>
            <person name="Ianakiev P."/>
            <person name="Bell-Pedersen D."/>
            <person name="Nelson M.A."/>
            <person name="Werner-Washburne M."/>
            <person name="Selitrennikoff C.P."/>
            <person name="Kinsey J.A."/>
            <person name="Braun E.L."/>
            <person name="Zelter A."/>
            <person name="Schulte U."/>
            <person name="Kothe G.O."/>
            <person name="Jedd G."/>
            <person name="Mewes H.-W."/>
            <person name="Staben C."/>
            <person name="Marcotte E."/>
            <person name="Greenberg D."/>
            <person name="Roy A."/>
            <person name="Foley K."/>
            <person name="Naylor J."/>
            <person name="Stange-Thomann N."/>
            <person name="Barrett R."/>
            <person name="Gnerre S."/>
            <person name="Kamal M."/>
            <person name="Kamvysselis M."/>
            <person name="Mauceli E.W."/>
            <person name="Bielke C."/>
            <person name="Rudd S."/>
            <person name="Frishman D."/>
            <person name="Krystofova S."/>
            <person name="Rasmussen C."/>
            <person name="Metzenberg R.L."/>
            <person name="Perkins D.D."/>
            <person name="Kroken S."/>
            <person name="Cogoni C."/>
            <person name="Macino G."/>
            <person name="Catcheside D.E.A."/>
            <person name="Li W."/>
            <person name="Pratt R.J."/>
            <person name="Osmani S.A."/>
            <person name="DeSouza C.P.C."/>
            <person name="Glass N.L."/>
            <person name="Orbach M.J."/>
            <person name="Berglund J.A."/>
            <person name="Voelker R."/>
            <person name="Yarden O."/>
            <person name="Plamann M."/>
            <person name="Seiler S."/>
            <person name="Dunlap J.C."/>
            <person name="Radford A."/>
            <person name="Aramayo R."/>
            <person name="Natvig D.O."/>
            <person name="Alex L.A."/>
            <person name="Mannhaupt G."/>
            <person name="Ebbole D.J."/>
            <person name="Freitag M."/>
            <person name="Paulsen I."/>
            <person name="Sachs M.S."/>
            <person name="Lander E.S."/>
            <person name="Nusbaum C."/>
            <person name="Birren B.W."/>
        </authorList>
    </citation>
    <scope>NUCLEOTIDE SEQUENCE [LARGE SCALE GENOMIC DNA]</scope>
    <source>
        <strain>ATCC 24698 / 74-OR23-1A / CBS 708.71 / DSM 1257 / FGSC 987</strain>
    </source>
</reference>
<reference key="4">
    <citation type="journal article" date="1975" name="Proc. Natl. Acad. Sci. U.S.A.">
        <title>Genetic evidence on the organization and action of the qa-1 gene product: a protein regulating the induction of three enzymes in quinate catabolism in Neurospora crassa.</title>
        <authorList>
            <person name="Case M.E."/>
            <person name="Giles N.H."/>
        </authorList>
    </citation>
    <scope>FUNCTION</scope>
</reference>
<reference key="5">
    <citation type="journal article" date="1976" name="Mol. Gen. Genet.">
        <title>Gene order in the qa gene cluster of Neurospora crassa.</title>
        <authorList>
            <person name="Case M.E."/>
            <person name="Giles N.H."/>
        </authorList>
    </citation>
    <scope>IDENTIFICATION WITHIN THE QA CLUSTER</scope>
</reference>
<reference key="6">
    <citation type="journal article" date="1978" name="J. Biol. Chem.">
        <title>Purification and characterization of 3-dehydroshikimate dehydratase, an enzyme in the inducible quinic acid catabolic pathway of Neurospora crassa.</title>
        <authorList>
            <person name="Stroeman P."/>
            <person name="Reinert W.R."/>
            <person name="Giles N.H."/>
        </authorList>
    </citation>
    <scope>FUNCTION</scope>
    <scope>CATALYTIC ACTIVITY</scope>
    <scope>BIOPHYSICOCHEMICAL PROPERTIES</scope>
    <scope>ACTIVITY REGULATION</scope>
    <scope>SUBUNIT</scope>
    <scope>PATHWAY</scope>
</reference>
<reference key="7">
    <citation type="journal article" date="1981" name="Mol. Cell. Biol.">
        <title>Genetic regulation of the qa gene cluster of Neurospora crassa: induction of qa messenger ribonucleic acid and dependency on qa-1 function.</title>
        <authorList>
            <person name="Reinert W.R."/>
            <person name="Patel V.B."/>
            <person name="Giles N.H."/>
        </authorList>
    </citation>
    <scope>INDUCTION</scope>
</reference>
<reference key="8">
    <citation type="journal article" date="1981" name="Proc. Natl. Acad. Sci. U.S.A.">
        <title>Genetic organization and transcriptional regulation in the qa gene cluster of Neurospora crassa.</title>
        <authorList>
            <person name="Patel V.B."/>
            <person name="Schweizer M."/>
            <person name="Dykstra C.C."/>
            <person name="Kushner S.R."/>
            <person name="Giles N.H."/>
        </authorList>
    </citation>
    <scope>FUNCTION</scope>
    <scope>INDUCTION</scope>
</reference>
<reference key="9">
    <citation type="journal article" date="2002" name="Proc. Natl. Acad. Sci. U.S.A.">
        <title>An ensemble method for identifying regulatory circuits with special reference to the qa gene cluster of Neurospora crassa.</title>
        <authorList>
            <person name="Battogtokh D."/>
            <person name="Asch D.K."/>
            <person name="Case M.E."/>
            <person name="Arnold J."/>
            <person name="Schuttler H.B."/>
        </authorList>
    </citation>
    <scope>INDUCTION</scope>
</reference>
<reference key="10">
    <citation type="journal article" date="2007" name="Bioinformation">
        <title>Genome-wide expression analysis of genetic networks in Neurospora crassa.</title>
        <authorList>
            <person name="Logan D.A."/>
            <person name="Koch A.L."/>
            <person name="Dong W."/>
            <person name="Griffith J."/>
            <person name="Nilsen R."/>
            <person name="Case M.E."/>
            <person name="Schuettler H.B."/>
            <person name="Arnold J."/>
        </authorList>
    </citation>
    <scope>INDUCTION</scope>
</reference>
<reference key="11">
    <citation type="journal article" date="2009" name="Fungal Genet. Biol.">
        <title>Catabolite repression directly affects transcription of the qa-y gene of Neurospora crassa.</title>
        <authorList>
            <person name="Arnett D.R."/>
            <person name="Lorimer H.E."/>
            <person name="Asch D.K."/>
        </authorList>
    </citation>
    <scope>INDUCTION</scope>
</reference>
<gene>
    <name evidence="9" type="primary">qa-4</name>
    <name type="ORF">NCU06024</name>
</gene>
<name>3SHD_NEUCR</name>
<feature type="chain" id="PRO_0000064378" description="3-dehydroshikimate dehydratase">
    <location>
        <begin position="1"/>
        <end position="359"/>
    </location>
</feature>
<proteinExistence type="evidence at protein level"/>
<keyword id="KW-0456">Lyase</keyword>
<keyword id="KW-0672">Quinate metabolism</keyword>
<keyword id="KW-1185">Reference proteome</keyword>
<comment type="function">
    <text evidence="2 5 6 11">3-dehydroshikimate dehydratase; part of the qa gene cluster that mediates the catabolism of quinic acid (QA) and as such, allows the use of QA as a sole carbon source (PubMed:2525625, PubMed:6458044). Catalyzes the third reaction in the inducible quinic acid catabolic pathway by converting dehydroshikimate to protocatechuate (PubMed:149131). The qa cluster encodes 3 inducible enymes (qa-2, qa-3 and qa-4) catalyzing the first three reactions in the catabolism of quinic acid to protocatechuic acid (also known as 3,4-Dihydroxybenzoic acid) (Probable).</text>
</comment>
<comment type="catalytic activity">
    <reaction evidence="2">
        <text>3-dehydroshikimate = 3,4-dihydroxybenzoate + H2O</text>
        <dbReference type="Rhea" id="RHEA:24848"/>
        <dbReference type="ChEBI" id="CHEBI:15377"/>
        <dbReference type="ChEBI" id="CHEBI:16630"/>
        <dbReference type="ChEBI" id="CHEBI:36241"/>
        <dbReference type="EC" id="4.2.1.118"/>
    </reaction>
    <physiologicalReaction direction="left-to-right" evidence="2">
        <dbReference type="Rhea" id="RHEA:24849"/>
    </physiologicalReaction>
</comment>
<comment type="activity regulation">
    <text evidence="2">Divalent cations such as Mg(2+), but also MO(2+), Mn(2+), Ba(2+), and Co(2+) activate the enzyme, whereas monovalent cations as K(+), Na(+), and NH4(+) decrease its activity slightly.</text>
</comment>
<comment type="biophysicochemical properties">
    <kinetics>
        <KM evidence="2">0.6 mM for dehydroshikimate</KM>
    </kinetics>
</comment>
<comment type="pathway">
    <text evidence="2">Aromatic compound metabolism; 3,4-dihydroxybenzoate biosynthesis; 3,4-dihydroxybenzoate from 3-dehydroquinate: step 2/2.</text>
</comment>
<comment type="subunit">
    <text evidence="2">Monomer.</text>
</comment>
<comment type="induction">
    <text evidence="1 3 4 6 7">Expression is induced in the presence of quinic acid (PubMed:6458044). The quinic acid (qa) gene cluster is subject to two levels of gene control: a primary system which responds to the presence of quinic acid via the qa-1S repressor protein that blocks the qa-1F activator, and a secondary system which represses transcription of qa genes in the presence of a preferred carbon source such as glucose (PubMed:12477937, PubMed:17597928, PubMed:19236936, PubMed:6458044, PubMed:9279395).</text>
</comment>
<comment type="similarity">
    <text evidence="10">Belongs to the bacterial two-domain DSD family.</text>
</comment>
<dbReference type="EC" id="4.2.1.118" evidence="2"/>
<dbReference type="EMBL" id="X14603">
    <property type="protein sequence ID" value="CAA32750.1"/>
    <property type="molecule type" value="Genomic_DNA"/>
</dbReference>
<dbReference type="EMBL" id="M10139">
    <property type="protein sequence ID" value="AAA33613.1"/>
    <property type="molecule type" value="Genomic_DNA"/>
</dbReference>
<dbReference type="EMBL" id="CM002242">
    <property type="protein sequence ID" value="EAA30378.1"/>
    <property type="molecule type" value="Genomic_DNA"/>
</dbReference>
<dbReference type="PIR" id="A22421">
    <property type="entry name" value="A22421"/>
</dbReference>
<dbReference type="RefSeq" id="XP_959614.1">
    <property type="nucleotide sequence ID" value="XM_954521.2"/>
</dbReference>
<dbReference type="SMR" id="P07046"/>
<dbReference type="STRING" id="367110.P07046"/>
<dbReference type="PaxDb" id="5141-EFNCRP00000005479"/>
<dbReference type="EnsemblFungi" id="EAA30378">
    <property type="protein sequence ID" value="EAA30378"/>
    <property type="gene ID" value="NCU06024"/>
</dbReference>
<dbReference type="GeneID" id="3875773"/>
<dbReference type="KEGG" id="ncr:NCU06024"/>
<dbReference type="VEuPathDB" id="FungiDB:NCU06024"/>
<dbReference type="HOGENOM" id="CLU_035063_0_0_1"/>
<dbReference type="InParanoid" id="P07046"/>
<dbReference type="OMA" id="HPFYNAE"/>
<dbReference type="OrthoDB" id="5360893at2759"/>
<dbReference type="BioCyc" id="MetaCyc:MONOMER-15329"/>
<dbReference type="UniPathway" id="UPA00088">
    <property type="reaction ID" value="UER00179"/>
</dbReference>
<dbReference type="Proteomes" id="UP000001805">
    <property type="component" value="Chromosome 7, Linkage Group VII"/>
</dbReference>
<dbReference type="GO" id="GO:0046565">
    <property type="term" value="F:3-dehydroshikimate dehydratase activity"/>
    <property type="evidence" value="ECO:0007669"/>
    <property type="project" value="RHEA"/>
</dbReference>
<dbReference type="GO" id="GO:0046279">
    <property type="term" value="P:3,4-dihydroxybenzoate biosynthetic process"/>
    <property type="evidence" value="ECO:0007669"/>
    <property type="project" value="UniProtKB-UniPathway"/>
</dbReference>
<dbReference type="GO" id="GO:0019630">
    <property type="term" value="P:quinate metabolic process"/>
    <property type="evidence" value="ECO:0007669"/>
    <property type="project" value="UniProtKB-KW"/>
</dbReference>
<dbReference type="Gene3D" id="3.20.20.150">
    <property type="entry name" value="Divalent-metal-dependent TIM barrel enzymes"/>
    <property type="match status" value="1"/>
</dbReference>
<dbReference type="InterPro" id="IPR050312">
    <property type="entry name" value="IolE/XylAMocC-like"/>
</dbReference>
<dbReference type="InterPro" id="IPR036237">
    <property type="entry name" value="Xyl_isomerase-like_sf"/>
</dbReference>
<dbReference type="InterPro" id="IPR013022">
    <property type="entry name" value="Xyl_isomerase-like_TIM-brl"/>
</dbReference>
<dbReference type="PANTHER" id="PTHR12110">
    <property type="entry name" value="HYDROXYPYRUVATE ISOMERASE"/>
    <property type="match status" value="1"/>
</dbReference>
<dbReference type="PANTHER" id="PTHR12110:SF21">
    <property type="entry name" value="XYLOSE ISOMERASE-LIKE TIM BARREL DOMAIN-CONTAINING PROTEIN"/>
    <property type="match status" value="1"/>
</dbReference>
<dbReference type="Pfam" id="PF01261">
    <property type="entry name" value="AP_endonuc_2"/>
    <property type="match status" value="1"/>
</dbReference>
<dbReference type="SUPFAM" id="SSF51658">
    <property type="entry name" value="Xylose isomerase-like"/>
    <property type="match status" value="1"/>
</dbReference>
<sequence length="359" mass="40493">MPSKLAISSMSLGRCFAGHSLDSKLDAAQRYGYLGIELFYEDLVDVAEHLSNERPSPEGPFVEAQIAAARHILQMCQARGLEVVCLQPFMHYDGLNDRAEHERRLEKLALWIELAHELHTDIIQIPANFLPANQVSDNLDLIVSDLCKVADIGAQALPPIRFAYESLCWSTRVDLWERCWDIVQRVDRPNFGICLDTFNILGRIYADPTSPSGRTPNAKEAVRKSIANLVSRVDVSKVFYVQVVDAERLSKPLLPGHPYYNPEQPARMSWSRNCRLFYGETEYGAYLPVKEVARALFHGIGFEGWVSLELFNRRMSEEGPEVPEELAMRGAISWAKLVQDLRIPVEGPLVTMPRVSASL</sequence>
<evidence type="ECO:0000269" key="1">
    <source>
    </source>
</evidence>
<evidence type="ECO:0000269" key="2">
    <source>
    </source>
</evidence>
<evidence type="ECO:0000269" key="3">
    <source>
    </source>
</evidence>
<evidence type="ECO:0000269" key="4">
    <source>
    </source>
</evidence>
<evidence type="ECO:0000269" key="5">
    <source>
    </source>
</evidence>
<evidence type="ECO:0000269" key="6">
    <source>
    </source>
</evidence>
<evidence type="ECO:0000269" key="7">
    <source>
    </source>
</evidence>
<evidence type="ECO:0000303" key="8">
    <source>
    </source>
</evidence>
<evidence type="ECO:0000303" key="9">
    <source>
    </source>
</evidence>
<evidence type="ECO:0000305" key="10"/>
<evidence type="ECO:0000305" key="11">
    <source>
    </source>
</evidence>
<protein>
    <recommendedName>
        <fullName evidence="8">3-dehydroshikimate dehydratase</fullName>
        <shortName evidence="8">DHS dehydratase</shortName>
        <shortName evidence="8">DHSase</shortName>
        <ecNumber evidence="2">4.2.1.118</ecNumber>
    </recommendedName>
    <alternativeName>
        <fullName evidence="9">Quinic acid degradation cluster protein 4</fullName>
    </alternativeName>
</protein>